<gene>
    <name type="ordered locus">AF_1227</name>
</gene>
<sequence length="110" mass="12469">MIKSYLLKTGEELREHGDVPAEYRELFSILIENEFKNAVLILNGEALYFESNSVSGLVEVDRKHIGAAKILLRRVAKEAKKVDLSSIEEAFEFAEQLEKADLDGIAKFLR</sequence>
<dbReference type="EMBL" id="AE000782">
    <property type="protein sequence ID" value="AAB90023.1"/>
    <property type="molecule type" value="Genomic_DNA"/>
</dbReference>
<dbReference type="PIR" id="B69403">
    <property type="entry name" value="B69403"/>
</dbReference>
<dbReference type="RefSeq" id="WP_010878722.1">
    <property type="nucleotide sequence ID" value="NC_000917.1"/>
</dbReference>
<dbReference type="STRING" id="224325.AF_1227"/>
<dbReference type="PaxDb" id="224325-AF_1227"/>
<dbReference type="EnsemblBacteria" id="AAB90023">
    <property type="protein sequence ID" value="AAB90023"/>
    <property type="gene ID" value="AF_1227"/>
</dbReference>
<dbReference type="KEGG" id="afu:AF_1227"/>
<dbReference type="HOGENOM" id="CLU_2165117_0_0_2"/>
<dbReference type="Proteomes" id="UP000002199">
    <property type="component" value="Chromosome"/>
</dbReference>
<accession>O29041</accession>
<protein>
    <recommendedName>
        <fullName>Uncharacterized protein AF_1227</fullName>
    </recommendedName>
</protein>
<keyword id="KW-1185">Reference proteome</keyword>
<proteinExistence type="predicted"/>
<name>Y1227_ARCFU</name>
<reference key="1">
    <citation type="journal article" date="1997" name="Nature">
        <title>The complete genome sequence of the hyperthermophilic, sulphate-reducing archaeon Archaeoglobus fulgidus.</title>
        <authorList>
            <person name="Klenk H.-P."/>
            <person name="Clayton R.A."/>
            <person name="Tomb J.-F."/>
            <person name="White O."/>
            <person name="Nelson K.E."/>
            <person name="Ketchum K.A."/>
            <person name="Dodson R.J."/>
            <person name="Gwinn M.L."/>
            <person name="Hickey E.K."/>
            <person name="Peterson J.D."/>
            <person name="Richardson D.L."/>
            <person name="Kerlavage A.R."/>
            <person name="Graham D.E."/>
            <person name="Kyrpides N.C."/>
            <person name="Fleischmann R.D."/>
            <person name="Quackenbush J."/>
            <person name="Lee N.H."/>
            <person name="Sutton G.G."/>
            <person name="Gill S.R."/>
            <person name="Kirkness E.F."/>
            <person name="Dougherty B.A."/>
            <person name="McKenney K."/>
            <person name="Adams M.D."/>
            <person name="Loftus B.J."/>
            <person name="Peterson S.N."/>
            <person name="Reich C.I."/>
            <person name="McNeil L.K."/>
            <person name="Badger J.H."/>
            <person name="Glodek A."/>
            <person name="Zhou L."/>
            <person name="Overbeek R."/>
            <person name="Gocayne J.D."/>
            <person name="Weidman J.F."/>
            <person name="McDonald L.A."/>
            <person name="Utterback T.R."/>
            <person name="Cotton M.D."/>
            <person name="Spriggs T."/>
            <person name="Artiach P."/>
            <person name="Kaine B.P."/>
            <person name="Sykes S.M."/>
            <person name="Sadow P.W."/>
            <person name="D'Andrea K.P."/>
            <person name="Bowman C."/>
            <person name="Fujii C."/>
            <person name="Garland S.A."/>
            <person name="Mason T.M."/>
            <person name="Olsen G.J."/>
            <person name="Fraser C.M."/>
            <person name="Smith H.O."/>
            <person name="Woese C.R."/>
            <person name="Venter J.C."/>
        </authorList>
    </citation>
    <scope>NUCLEOTIDE SEQUENCE [LARGE SCALE GENOMIC DNA]</scope>
    <source>
        <strain>ATCC 49558 / DSM 4304 / JCM 9628 / NBRC 100126 / VC-16</strain>
    </source>
</reference>
<organism>
    <name type="scientific">Archaeoglobus fulgidus (strain ATCC 49558 / DSM 4304 / JCM 9628 / NBRC 100126 / VC-16)</name>
    <dbReference type="NCBI Taxonomy" id="224325"/>
    <lineage>
        <taxon>Archaea</taxon>
        <taxon>Methanobacteriati</taxon>
        <taxon>Methanobacteriota</taxon>
        <taxon>Archaeoglobi</taxon>
        <taxon>Archaeoglobales</taxon>
        <taxon>Archaeoglobaceae</taxon>
        <taxon>Archaeoglobus</taxon>
    </lineage>
</organism>
<feature type="chain" id="PRO_0000127974" description="Uncharacterized protein AF_1227">
    <location>
        <begin position="1"/>
        <end position="110"/>
    </location>
</feature>